<comment type="function">
    <text evidence="1">Pyridoxal 5'-phosphate (PLP)-binding protein, which is involved in PLP homeostasis.</text>
</comment>
<comment type="similarity">
    <text evidence="1">Belongs to the pyridoxal phosphate-binding protein YggS/PROSC family.</text>
</comment>
<organism>
    <name type="scientific">Helicobacter pylori (strain J99 / ATCC 700824)</name>
    <name type="common">Campylobacter pylori J99</name>
    <dbReference type="NCBI Taxonomy" id="85963"/>
    <lineage>
        <taxon>Bacteria</taxon>
        <taxon>Pseudomonadati</taxon>
        <taxon>Campylobacterota</taxon>
        <taxon>Epsilonproteobacteria</taxon>
        <taxon>Campylobacterales</taxon>
        <taxon>Helicobacteraceae</taxon>
        <taxon>Helicobacter</taxon>
    </lineage>
</organism>
<accession>Q9ZKF2</accession>
<reference key="1">
    <citation type="journal article" date="1999" name="Nature">
        <title>Genomic sequence comparison of two unrelated isolates of the human gastric pathogen Helicobacter pylori.</title>
        <authorList>
            <person name="Alm R.A."/>
            <person name="Ling L.-S.L."/>
            <person name="Moir D.T."/>
            <person name="King B.L."/>
            <person name="Brown E.D."/>
            <person name="Doig P.C."/>
            <person name="Smith D.R."/>
            <person name="Noonan B."/>
            <person name="Guild B.C."/>
            <person name="deJonge B.L."/>
            <person name="Carmel G."/>
            <person name="Tummino P.J."/>
            <person name="Caruso A."/>
            <person name="Uria-Nickelsen M."/>
            <person name="Mills D.M."/>
            <person name="Ives C."/>
            <person name="Gibson R."/>
            <person name="Merberg D."/>
            <person name="Mills S.D."/>
            <person name="Jiang Q."/>
            <person name="Taylor D.E."/>
            <person name="Vovis G.F."/>
            <person name="Trust T.J."/>
        </authorList>
    </citation>
    <scope>NUCLEOTIDE SEQUENCE [LARGE SCALE GENOMIC DNA]</scope>
    <source>
        <strain>J99 / ATCC 700824</strain>
    </source>
</reference>
<evidence type="ECO:0000255" key="1">
    <source>
        <dbReference type="HAMAP-Rule" id="MF_02087"/>
    </source>
</evidence>
<sequence>MLDYRQRIDTLITKIEKARIAYSRHHIVKIVAVSKNASPEAIQHYYNCSQRAFGENKVQDLKIKMHSLEHLPLEWHMIGSLQENKINALLSLKPALLHSLDSLKLALKIEKRCEILGVNLNALLQVNSAYEESKSGVVPEEALETYSQISETCKRLKLKGLMCIGAHTDDETKIEKSFTTTKKLFDQIKNASVLSMGMSDDFELAIACGANLLRIGSFLFKE</sequence>
<gene>
    <name type="ordered locus">jhp_0986</name>
</gene>
<protein>
    <recommendedName>
        <fullName evidence="1">Pyridoxal phosphate homeostasis protein</fullName>
        <shortName evidence="1">PLP homeostasis protein</shortName>
    </recommendedName>
</protein>
<feature type="chain" id="PRO_0000163201" description="Pyridoxal phosphate homeostasis protein">
    <location>
        <begin position="1"/>
        <end position="222"/>
    </location>
</feature>
<feature type="modified residue" description="N6-(pyridoxal phosphate)lysine" evidence="1">
    <location>
        <position position="35"/>
    </location>
</feature>
<dbReference type="EMBL" id="AE001439">
    <property type="protein sequence ID" value="AAD06567.1"/>
    <property type="molecule type" value="Genomic_DNA"/>
</dbReference>
<dbReference type="PIR" id="E71864">
    <property type="entry name" value="E71864"/>
</dbReference>
<dbReference type="RefSeq" id="WP_000888231.1">
    <property type="nucleotide sequence ID" value="NC_000921.1"/>
</dbReference>
<dbReference type="SMR" id="Q9ZKF2"/>
<dbReference type="KEGG" id="hpj:jhp_0986"/>
<dbReference type="PATRIC" id="fig|85963.30.peg.1605"/>
<dbReference type="eggNOG" id="COG0325">
    <property type="taxonomic scope" value="Bacteria"/>
</dbReference>
<dbReference type="Proteomes" id="UP000000804">
    <property type="component" value="Chromosome"/>
</dbReference>
<dbReference type="GO" id="GO:0030170">
    <property type="term" value="F:pyridoxal phosphate binding"/>
    <property type="evidence" value="ECO:0007669"/>
    <property type="project" value="UniProtKB-UniRule"/>
</dbReference>
<dbReference type="CDD" id="cd00635">
    <property type="entry name" value="PLPDE_III_YBL036c_like"/>
    <property type="match status" value="1"/>
</dbReference>
<dbReference type="FunFam" id="3.20.20.10:FF:000018">
    <property type="entry name" value="Pyridoxal phosphate homeostasis protein"/>
    <property type="match status" value="1"/>
</dbReference>
<dbReference type="Gene3D" id="3.20.20.10">
    <property type="entry name" value="Alanine racemase"/>
    <property type="match status" value="1"/>
</dbReference>
<dbReference type="HAMAP" id="MF_02087">
    <property type="entry name" value="PLP_homeostasis"/>
    <property type="match status" value="1"/>
</dbReference>
<dbReference type="InterPro" id="IPR001608">
    <property type="entry name" value="Ala_racemase_N"/>
</dbReference>
<dbReference type="InterPro" id="IPR029066">
    <property type="entry name" value="PLP-binding_barrel"/>
</dbReference>
<dbReference type="InterPro" id="IPR011078">
    <property type="entry name" value="PyrdxlP_homeostasis"/>
</dbReference>
<dbReference type="NCBIfam" id="TIGR00044">
    <property type="entry name" value="YggS family pyridoxal phosphate-dependent enzyme"/>
    <property type="match status" value="1"/>
</dbReference>
<dbReference type="PANTHER" id="PTHR10146">
    <property type="entry name" value="PROLINE SYNTHETASE CO-TRANSCRIBED BACTERIAL HOMOLOG PROTEIN"/>
    <property type="match status" value="1"/>
</dbReference>
<dbReference type="PANTHER" id="PTHR10146:SF14">
    <property type="entry name" value="PYRIDOXAL PHOSPHATE HOMEOSTASIS PROTEIN"/>
    <property type="match status" value="1"/>
</dbReference>
<dbReference type="Pfam" id="PF01168">
    <property type="entry name" value="Ala_racemase_N"/>
    <property type="match status" value="1"/>
</dbReference>
<dbReference type="PIRSF" id="PIRSF004848">
    <property type="entry name" value="YBL036c_PLPDEIII"/>
    <property type="match status" value="1"/>
</dbReference>
<dbReference type="SUPFAM" id="SSF51419">
    <property type="entry name" value="PLP-binding barrel"/>
    <property type="match status" value="1"/>
</dbReference>
<dbReference type="PROSITE" id="PS01211">
    <property type="entry name" value="UPF0001"/>
    <property type="match status" value="1"/>
</dbReference>
<name>PLPHP_HELPJ</name>
<keyword id="KW-0663">Pyridoxal phosphate</keyword>
<proteinExistence type="inferred from homology"/>